<evidence type="ECO:0000250" key="1"/>
<evidence type="ECO:0000256" key="2">
    <source>
        <dbReference type="SAM" id="MobiDB-lite"/>
    </source>
</evidence>
<evidence type="ECO:0000269" key="3">
    <source>
    </source>
</evidence>
<evidence type="ECO:0000269" key="4">
    <source>
    </source>
</evidence>
<evidence type="ECO:0000305" key="5"/>
<sequence>MEGNWFEGPPCSVRNCKSTWYFKNAGQTFCRRGHAQHGIEIAQDDEPGAGTFYQTRKRKVVRNHLDTGDEDEIVYGTAGRSLYLQAFQIILQLQCQALTTKLGFDQRIEGMIRDLWALYLSLSYESFTSSFLSLNQNSTQSESSDSDFDLIDPESQPGADPSSRKTKETSQSHSISYPRLLYSSAFIYVACLLLRLPLTIHKLEVLIRKNIIPYYRAYKQIPLKIFKRLQKNYVRMLIPFHYPTYQRIQSAVLTLVDVLVSKYELKVPPPNEPLILFELINSFFFPLEIFIPASRLLNLVHSQISLQGTSSDNYQSKIRSAQSIHEKLSDAEVMLLATILVAANVCYGFDDAQTRNSKYKDSMFTVKTNWNMWLSQVQKINEKEKDKFYEIDEQSILTLNNSEMDKYFQWYEKEFVEENNPNNIPEGILNVFPILSKDSHLQENQPTDILTDESVIAEDVKLEQVFKPVGIKESDKMDFSRRKDAYISMLPFSPNTENTAHRVTIMVAKLYNIKLDSLIAAIRYVESCLKTGIHNQD</sequence>
<name>RRN7_SCHPO</name>
<reference key="1">
    <citation type="journal article" date="2002" name="Nature">
        <title>The genome sequence of Schizosaccharomyces pombe.</title>
        <authorList>
            <person name="Wood V."/>
            <person name="Gwilliam R."/>
            <person name="Rajandream M.A."/>
            <person name="Lyne M.H."/>
            <person name="Lyne R."/>
            <person name="Stewart A."/>
            <person name="Sgouros J.G."/>
            <person name="Peat N."/>
            <person name="Hayles J."/>
            <person name="Baker S.G."/>
            <person name="Basham D."/>
            <person name="Bowman S."/>
            <person name="Brooks K."/>
            <person name="Brown D."/>
            <person name="Brown S."/>
            <person name="Chillingworth T."/>
            <person name="Churcher C.M."/>
            <person name="Collins M."/>
            <person name="Connor R."/>
            <person name="Cronin A."/>
            <person name="Davis P."/>
            <person name="Feltwell T."/>
            <person name="Fraser A."/>
            <person name="Gentles S."/>
            <person name="Goble A."/>
            <person name="Hamlin N."/>
            <person name="Harris D.E."/>
            <person name="Hidalgo J."/>
            <person name="Hodgson G."/>
            <person name="Holroyd S."/>
            <person name="Hornsby T."/>
            <person name="Howarth S."/>
            <person name="Huckle E.J."/>
            <person name="Hunt S."/>
            <person name="Jagels K."/>
            <person name="James K.D."/>
            <person name="Jones L."/>
            <person name="Jones M."/>
            <person name="Leather S."/>
            <person name="McDonald S."/>
            <person name="McLean J."/>
            <person name="Mooney P."/>
            <person name="Moule S."/>
            <person name="Mungall K.L."/>
            <person name="Murphy L.D."/>
            <person name="Niblett D."/>
            <person name="Odell C."/>
            <person name="Oliver K."/>
            <person name="O'Neil S."/>
            <person name="Pearson D."/>
            <person name="Quail M.A."/>
            <person name="Rabbinowitsch E."/>
            <person name="Rutherford K.M."/>
            <person name="Rutter S."/>
            <person name="Saunders D."/>
            <person name="Seeger K."/>
            <person name="Sharp S."/>
            <person name="Skelton J."/>
            <person name="Simmonds M.N."/>
            <person name="Squares R."/>
            <person name="Squares S."/>
            <person name="Stevens K."/>
            <person name="Taylor K."/>
            <person name="Taylor R.G."/>
            <person name="Tivey A."/>
            <person name="Walsh S.V."/>
            <person name="Warren T."/>
            <person name="Whitehead S."/>
            <person name="Woodward J.R."/>
            <person name="Volckaert G."/>
            <person name="Aert R."/>
            <person name="Robben J."/>
            <person name="Grymonprez B."/>
            <person name="Weltjens I."/>
            <person name="Vanstreels E."/>
            <person name="Rieger M."/>
            <person name="Schaefer M."/>
            <person name="Mueller-Auer S."/>
            <person name="Gabel C."/>
            <person name="Fuchs M."/>
            <person name="Duesterhoeft A."/>
            <person name="Fritzc C."/>
            <person name="Holzer E."/>
            <person name="Moestl D."/>
            <person name="Hilbert H."/>
            <person name="Borzym K."/>
            <person name="Langer I."/>
            <person name="Beck A."/>
            <person name="Lehrach H."/>
            <person name="Reinhardt R."/>
            <person name="Pohl T.M."/>
            <person name="Eger P."/>
            <person name="Zimmermann W."/>
            <person name="Wedler H."/>
            <person name="Wambutt R."/>
            <person name="Purnelle B."/>
            <person name="Goffeau A."/>
            <person name="Cadieu E."/>
            <person name="Dreano S."/>
            <person name="Gloux S."/>
            <person name="Lelaure V."/>
            <person name="Mottier S."/>
            <person name="Galibert F."/>
            <person name="Aves S.J."/>
            <person name="Xiang Z."/>
            <person name="Hunt C."/>
            <person name="Moore K."/>
            <person name="Hurst S.M."/>
            <person name="Lucas M."/>
            <person name="Rochet M."/>
            <person name="Gaillardin C."/>
            <person name="Tallada V.A."/>
            <person name="Garzon A."/>
            <person name="Thode G."/>
            <person name="Daga R.R."/>
            <person name="Cruzado L."/>
            <person name="Jimenez J."/>
            <person name="Sanchez M."/>
            <person name="del Rey F."/>
            <person name="Benito J."/>
            <person name="Dominguez A."/>
            <person name="Revuelta J.L."/>
            <person name="Moreno S."/>
            <person name="Armstrong J."/>
            <person name="Forsburg S.L."/>
            <person name="Cerutti L."/>
            <person name="Lowe T."/>
            <person name="McCombie W.R."/>
            <person name="Paulsen I."/>
            <person name="Potashkin J."/>
            <person name="Shpakovski G.V."/>
            <person name="Ussery D."/>
            <person name="Barrell B.G."/>
            <person name="Nurse P."/>
        </authorList>
    </citation>
    <scope>NUCLEOTIDE SEQUENCE [LARGE SCALE GENOMIC DNA]</scope>
    <source>
        <strain>972 / ATCC 24843</strain>
    </source>
</reference>
<reference key="2">
    <citation type="journal article" date="2002" name="Gene">
        <title>Characterization of a fission yeast subunit of an RNA polymerase I essential transcription initiation factor, SpRrn7h/TAF(I)68, that bridges yeast and mammals: association with SpRrn11h and the core ribosomal RNA gene promoter.</title>
        <authorList>
            <person name="Boukhgalter B."/>
            <person name="Liu M."/>
            <person name="Guo A."/>
            <person name="Tripp M."/>
            <person name="Tran K."/>
            <person name="Huynh C."/>
            <person name="Pape L."/>
        </authorList>
    </citation>
    <scope>IDENTIFICATION</scope>
    <scope>FUNCTION</scope>
</reference>
<reference key="3">
    <citation type="journal article" date="2008" name="J. Cell Biol.">
        <title>Dissection of the essential steps for condensin accumulation at kinetochores and rDNAs during fission yeast mitosis.</title>
        <authorList>
            <person name="Nakazawa N."/>
            <person name="Nakamura T."/>
            <person name="Kokubu A."/>
            <person name="Ebe M."/>
            <person name="Nagao K."/>
            <person name="Yanagida M."/>
        </authorList>
    </citation>
    <scope>INTERACTION WITH ACR1</scope>
</reference>
<reference key="4">
    <citation type="journal article" date="2011" name="J. Biol. Chem.">
        <title>Rrn7 protein, an RNA polymerase I transcription factor, is required for RNA polymerase II-dependent transcription directed by core promoters with a HomolD box sequence.</title>
        <authorList>
            <person name="Rojas D.A."/>
            <person name="Moreira-Ramos S."/>
            <person name="Zock-Emmenthal S."/>
            <person name="Urbina F."/>
            <person name="Contreras-Levicoy J."/>
            <person name="Kaufer N.F."/>
            <person name="Maldonado E."/>
        </authorList>
    </citation>
    <scope>DNA-BINDING</scope>
</reference>
<feature type="chain" id="PRO_0000097449" description="RNA polymerase I-specific transcription initiation factor rrn7">
    <location>
        <begin position="1"/>
        <end position="537"/>
    </location>
</feature>
<feature type="zinc finger region" description="RRN7-type">
    <location>
        <begin position="4"/>
        <end position="37"/>
    </location>
</feature>
<feature type="region of interest" description="B-reader" evidence="1">
    <location>
        <begin position="38"/>
        <end position="64"/>
    </location>
</feature>
<feature type="region of interest" description="B-linker" evidence="1">
    <location>
        <begin position="65"/>
        <end position="80"/>
    </location>
</feature>
<feature type="region of interest" description="N-terminal cyclin fold" evidence="1">
    <location>
        <begin position="81"/>
        <end position="232"/>
    </location>
</feature>
<feature type="region of interest" description="Disordered" evidence="2">
    <location>
        <begin position="142"/>
        <end position="171"/>
    </location>
</feature>
<feature type="region of interest" description="C-terminal cyclin fold" evidence="1">
    <location>
        <begin position="233"/>
        <end position="349"/>
    </location>
</feature>
<feature type="binding site" evidence="1">
    <location>
        <position position="11"/>
    </location>
    <ligand>
        <name>Zn(2+)</name>
        <dbReference type="ChEBI" id="CHEBI:29105"/>
    </ligand>
</feature>
<feature type="binding site" evidence="1">
    <location>
        <position position="16"/>
    </location>
    <ligand>
        <name>Zn(2+)</name>
        <dbReference type="ChEBI" id="CHEBI:29105"/>
    </ligand>
</feature>
<feature type="binding site" evidence="1">
    <location>
        <position position="30"/>
    </location>
    <ligand>
        <name>Zn(2+)</name>
        <dbReference type="ChEBI" id="CHEBI:29105"/>
    </ligand>
</feature>
<feature type="binding site" evidence="1">
    <location>
        <position position="34"/>
    </location>
    <ligand>
        <name>Zn(2+)</name>
        <dbReference type="ChEBI" id="CHEBI:29105"/>
    </ligand>
</feature>
<dbReference type="EMBL" id="CU329671">
    <property type="protein sequence ID" value="CAB58161.1"/>
    <property type="molecule type" value="Genomic_DNA"/>
</dbReference>
<dbReference type="PIR" id="T40247">
    <property type="entry name" value="T40247"/>
</dbReference>
<dbReference type="RefSeq" id="NP_596129.1">
    <property type="nucleotide sequence ID" value="NM_001022047.2"/>
</dbReference>
<dbReference type="BioGRID" id="276768">
    <property type="interactions" value="8"/>
</dbReference>
<dbReference type="FunCoup" id="Q9UST5">
    <property type="interactions" value="58"/>
</dbReference>
<dbReference type="STRING" id="284812.Q9UST5"/>
<dbReference type="iPTMnet" id="Q9UST5"/>
<dbReference type="PaxDb" id="4896-SPBC336.09c.1"/>
<dbReference type="EnsemblFungi" id="SPBC336.09c.1">
    <property type="protein sequence ID" value="SPBC336.09c.1:pep"/>
    <property type="gene ID" value="SPBC336.09c"/>
</dbReference>
<dbReference type="GeneID" id="2540236"/>
<dbReference type="KEGG" id="spo:2540236"/>
<dbReference type="PomBase" id="SPBC336.09c">
    <property type="gene designation" value="rrn7"/>
</dbReference>
<dbReference type="VEuPathDB" id="FungiDB:SPBC336.09c"/>
<dbReference type="eggNOG" id="ENOG502RYCI">
    <property type="taxonomic scope" value="Eukaryota"/>
</dbReference>
<dbReference type="HOGENOM" id="CLU_016553_2_1_1"/>
<dbReference type="InParanoid" id="Q9UST5"/>
<dbReference type="OMA" id="ICRDIWA"/>
<dbReference type="PhylomeDB" id="Q9UST5"/>
<dbReference type="Reactome" id="R-SPO-73772">
    <property type="pathway name" value="RNA Polymerase I Promoter Escape"/>
</dbReference>
<dbReference type="PRO" id="PR:Q9UST5"/>
<dbReference type="Proteomes" id="UP000002485">
    <property type="component" value="Chromosome II"/>
</dbReference>
<dbReference type="GO" id="GO:0005829">
    <property type="term" value="C:cytosol"/>
    <property type="evidence" value="ECO:0007005"/>
    <property type="project" value="PomBase"/>
</dbReference>
<dbReference type="GO" id="GO:0005634">
    <property type="term" value="C:nucleus"/>
    <property type="evidence" value="ECO:0007005"/>
    <property type="project" value="PomBase"/>
</dbReference>
<dbReference type="GO" id="GO:0070860">
    <property type="term" value="C:RNA polymerase I core factor complex"/>
    <property type="evidence" value="ECO:0000318"/>
    <property type="project" value="GO_Central"/>
</dbReference>
<dbReference type="GO" id="GO:0000120">
    <property type="term" value="C:RNA polymerase I transcription regulator complex"/>
    <property type="evidence" value="ECO:0000314"/>
    <property type="project" value="PomBase"/>
</dbReference>
<dbReference type="GO" id="GO:0001164">
    <property type="term" value="F:RNA polymerase I core promoter sequence-specific DNA binding"/>
    <property type="evidence" value="ECO:0000314"/>
    <property type="project" value="PomBase"/>
</dbReference>
<dbReference type="GO" id="GO:0008270">
    <property type="term" value="F:zinc ion binding"/>
    <property type="evidence" value="ECO:0007669"/>
    <property type="project" value="UniProtKB-KW"/>
</dbReference>
<dbReference type="GO" id="GO:0042790">
    <property type="term" value="P:nucleolar large rRNA transcription by RNA polymerase I"/>
    <property type="evidence" value="ECO:0000318"/>
    <property type="project" value="GO_Central"/>
</dbReference>
<dbReference type="GO" id="GO:0006361">
    <property type="term" value="P:transcription initiation at RNA polymerase I promoter"/>
    <property type="evidence" value="ECO:0000314"/>
    <property type="project" value="PomBase"/>
</dbReference>
<dbReference type="InterPro" id="IPR048538">
    <property type="entry name" value="Rrn7_cyclin_C"/>
</dbReference>
<dbReference type="InterPro" id="IPR048540">
    <property type="entry name" value="Rrn7_cyclin_N"/>
</dbReference>
<dbReference type="InterPro" id="IPR033599">
    <property type="entry name" value="TAF1B/Rrn7"/>
</dbReference>
<dbReference type="InterPro" id="IPR021752">
    <property type="entry name" value="TF_Rrn7_Zf"/>
</dbReference>
<dbReference type="PANTHER" id="PTHR31576">
    <property type="entry name" value="TATA BOX-BINDING PROTEIN-ASSOCIATED FACTOR RNA POLYMERASE I SUBUNIT B"/>
    <property type="match status" value="1"/>
</dbReference>
<dbReference type="PANTHER" id="PTHR31576:SF2">
    <property type="entry name" value="TATA BOX-BINDING PROTEIN-ASSOCIATED FACTOR RNA POLYMERASE I SUBUNIT B"/>
    <property type="match status" value="1"/>
</dbReference>
<dbReference type="Pfam" id="PF20645">
    <property type="entry name" value="Rrn7_cyclin_C"/>
    <property type="match status" value="1"/>
</dbReference>
<dbReference type="Pfam" id="PF20644">
    <property type="entry name" value="Rrn7_cyclin_N"/>
    <property type="match status" value="1"/>
</dbReference>
<dbReference type="Pfam" id="PF11781">
    <property type="entry name" value="Zn_ribbon_RRN7"/>
    <property type="match status" value="1"/>
</dbReference>
<keyword id="KW-0238">DNA-binding</keyword>
<keyword id="KW-0479">Metal-binding</keyword>
<keyword id="KW-0539">Nucleus</keyword>
<keyword id="KW-1185">Reference proteome</keyword>
<keyword id="KW-0804">Transcription</keyword>
<keyword id="KW-0805">Transcription regulation</keyword>
<keyword id="KW-0862">Zinc</keyword>
<keyword id="KW-0863">Zinc-finger</keyword>
<gene>
    <name type="primary">rrn7</name>
    <name type="ORF">SPBC336.09c</name>
</gene>
<comment type="function">
    <text evidence="3">Component of RNA polymerase I core factor complex (CF) that acts as a sua7/TFIIB-like factor and plays a key role in multiple steps during transcription initiation such as pre-initiation complex (PIC) assembly and postpolymerase recruitment events in polymerase I (Pol I) transcription. Binds HomolD box in rDNA promoters and plays a role in Pol I recruitment.</text>
</comment>
<comment type="subunit">
    <text evidence="4">Component of the core factor (CF) complex. Interacts with acr1.</text>
</comment>
<comment type="subcellular location">
    <subcellularLocation>
        <location evidence="1">Nucleus</location>
        <location evidence="1">Nucleolus</location>
    </subcellularLocation>
</comment>
<comment type="domain">
    <text evidence="1">Although it shares weak sequence similarity with sua7/TFIIB, displays a similar subdomain organization as sua7/TFIIB, with a N-terminal zinc finger, a connecting region (composed of B-reader and B-linker regions), followed by 2 cyclin folds.</text>
</comment>
<comment type="similarity">
    <text evidence="5">Belongs to the RRN7/TAF1B family.</text>
</comment>
<protein>
    <recommendedName>
        <fullName>RNA polymerase I-specific transcription initiation factor rrn7</fullName>
    </recommendedName>
</protein>
<proteinExistence type="evidence at protein level"/>
<organism>
    <name type="scientific">Schizosaccharomyces pombe (strain 972 / ATCC 24843)</name>
    <name type="common">Fission yeast</name>
    <dbReference type="NCBI Taxonomy" id="284812"/>
    <lineage>
        <taxon>Eukaryota</taxon>
        <taxon>Fungi</taxon>
        <taxon>Dikarya</taxon>
        <taxon>Ascomycota</taxon>
        <taxon>Taphrinomycotina</taxon>
        <taxon>Schizosaccharomycetes</taxon>
        <taxon>Schizosaccharomycetales</taxon>
        <taxon>Schizosaccharomycetaceae</taxon>
        <taxon>Schizosaccharomyces</taxon>
    </lineage>
</organism>
<accession>Q9UST5</accession>